<name>T23O_BORPA</name>
<reference key="1">
    <citation type="journal article" date="2003" name="Nat. Genet.">
        <title>Comparative analysis of the genome sequences of Bordetella pertussis, Bordetella parapertussis and Bordetella bronchiseptica.</title>
        <authorList>
            <person name="Parkhill J."/>
            <person name="Sebaihia M."/>
            <person name="Preston A."/>
            <person name="Murphy L.D."/>
            <person name="Thomson N.R."/>
            <person name="Harris D.E."/>
            <person name="Holden M.T.G."/>
            <person name="Churcher C.M."/>
            <person name="Bentley S.D."/>
            <person name="Mungall K.L."/>
            <person name="Cerdeno-Tarraga A.-M."/>
            <person name="Temple L."/>
            <person name="James K.D."/>
            <person name="Harris B."/>
            <person name="Quail M.A."/>
            <person name="Achtman M."/>
            <person name="Atkin R."/>
            <person name="Baker S."/>
            <person name="Basham D."/>
            <person name="Bason N."/>
            <person name="Cherevach I."/>
            <person name="Chillingworth T."/>
            <person name="Collins M."/>
            <person name="Cronin A."/>
            <person name="Davis P."/>
            <person name="Doggett J."/>
            <person name="Feltwell T."/>
            <person name="Goble A."/>
            <person name="Hamlin N."/>
            <person name="Hauser H."/>
            <person name="Holroyd S."/>
            <person name="Jagels K."/>
            <person name="Leather S."/>
            <person name="Moule S."/>
            <person name="Norberczak H."/>
            <person name="O'Neil S."/>
            <person name="Ormond D."/>
            <person name="Price C."/>
            <person name="Rabbinowitsch E."/>
            <person name="Rutter S."/>
            <person name="Sanders M."/>
            <person name="Saunders D."/>
            <person name="Seeger K."/>
            <person name="Sharp S."/>
            <person name="Simmonds M."/>
            <person name="Skelton J."/>
            <person name="Squares R."/>
            <person name="Squares S."/>
            <person name="Stevens K."/>
            <person name="Unwin L."/>
            <person name="Whitehead S."/>
            <person name="Barrell B.G."/>
            <person name="Maskell D.J."/>
        </authorList>
    </citation>
    <scope>NUCLEOTIDE SEQUENCE [LARGE SCALE GENOMIC DNA]</scope>
    <source>
        <strain>12822 / ATCC BAA-587 / NCTC 13253</strain>
    </source>
</reference>
<evidence type="ECO:0000255" key="1">
    <source>
        <dbReference type="HAMAP-Rule" id="MF_01972"/>
    </source>
</evidence>
<feature type="chain" id="PRO_0000360091" description="Tryptophan 2,3-dioxygenase">
    <location>
        <begin position="1"/>
        <end position="284"/>
    </location>
</feature>
<feature type="binding site" evidence="1">
    <location>
        <begin position="53"/>
        <end position="57"/>
    </location>
    <ligand>
        <name>substrate</name>
    </ligand>
</feature>
<feature type="binding site" evidence="1">
    <location>
        <position position="115"/>
    </location>
    <ligand>
        <name>substrate</name>
    </ligand>
</feature>
<feature type="binding site" evidence="1">
    <location>
        <position position="119"/>
    </location>
    <ligand>
        <name>substrate</name>
    </ligand>
</feature>
<feature type="binding site" description="axial binding residue" evidence="1">
    <location>
        <position position="242"/>
    </location>
    <ligand>
        <name>heme</name>
        <dbReference type="ChEBI" id="CHEBI:30413"/>
    </ligand>
    <ligandPart>
        <name>Fe</name>
        <dbReference type="ChEBI" id="CHEBI:18248"/>
    </ligandPart>
</feature>
<feature type="binding site" evidence="1">
    <location>
        <position position="256"/>
    </location>
    <ligand>
        <name>substrate</name>
    </ligand>
</feature>
<organism>
    <name type="scientific">Bordetella parapertussis (strain 12822 / ATCC BAA-587 / NCTC 13253)</name>
    <dbReference type="NCBI Taxonomy" id="257311"/>
    <lineage>
        <taxon>Bacteria</taxon>
        <taxon>Pseudomonadati</taxon>
        <taxon>Pseudomonadota</taxon>
        <taxon>Betaproteobacteria</taxon>
        <taxon>Burkholderiales</taxon>
        <taxon>Alcaligenaceae</taxon>
        <taxon>Bordetella</taxon>
    </lineage>
</organism>
<accession>Q7W9B7</accession>
<proteinExistence type="inferred from homology"/>
<keyword id="KW-0223">Dioxygenase</keyword>
<keyword id="KW-0349">Heme</keyword>
<keyword id="KW-0408">Iron</keyword>
<keyword id="KW-0479">Metal-binding</keyword>
<keyword id="KW-0560">Oxidoreductase</keyword>
<keyword id="KW-0823">Tryptophan catabolism</keyword>
<comment type="function">
    <text evidence="1">Heme-dependent dioxygenase that catalyzes the oxidative cleavage of the L-tryptophan (L-Trp) pyrrole ring and converts L-tryptophan to N-formyl-L-kynurenine. Catalyzes the oxidative cleavage of the indole moiety.</text>
</comment>
<comment type="catalytic activity">
    <reaction evidence="1">
        <text>L-tryptophan + O2 = N-formyl-L-kynurenine</text>
        <dbReference type="Rhea" id="RHEA:24536"/>
        <dbReference type="ChEBI" id="CHEBI:15379"/>
        <dbReference type="ChEBI" id="CHEBI:57912"/>
        <dbReference type="ChEBI" id="CHEBI:58629"/>
        <dbReference type="EC" id="1.13.11.11"/>
    </reaction>
</comment>
<comment type="cofactor">
    <cofactor evidence="1">
        <name>heme</name>
        <dbReference type="ChEBI" id="CHEBI:30413"/>
    </cofactor>
    <text evidence="1">Binds 1 heme group per subunit.</text>
</comment>
<comment type="pathway">
    <text evidence="1">Amino-acid degradation; L-tryptophan degradation via kynurenine pathway; L-kynurenine from L-tryptophan: step 1/2.</text>
</comment>
<comment type="subunit">
    <text evidence="1">Homotetramer.</text>
</comment>
<comment type="similarity">
    <text evidence="1">Belongs to the tryptophan 2,3-dioxygenase family.</text>
</comment>
<sequence length="284" mass="32961">MQPTPTQRPEAIVHDEKAQLDFARDMSYGDYLHLDELLGAQRPLSPEHNEMLFIVQHQTSELWMKLMLHELRAAIAAIQQDRLQPAFKMLARVSKILEQLVSAWDVLATMTPPEYSALRPYLAHSSGFQSYQYRQIEYLLGNKNAAMLQPHAHRADLLAQVRAAFEAPSLYDEALRFLARSGLAVPAGALQRDWTQPYRADDQVEQAWLTVYRQSERYWNQYQLGEKLTDLEDAFRLWRFRHVTTVERIIGFKRGTGGTSGVTYLRKMLEVVLFPEIWKLRTDL</sequence>
<gene>
    <name evidence="1" type="primary">kynA</name>
    <name type="ordered locus">BPP1848</name>
</gene>
<dbReference type="EC" id="1.13.11.11" evidence="1"/>
<dbReference type="EMBL" id="BX640428">
    <property type="protein sequence ID" value="CAE37149.1"/>
    <property type="molecule type" value="Genomic_DNA"/>
</dbReference>
<dbReference type="RefSeq" id="WP_010928236.1">
    <property type="nucleotide sequence ID" value="NC_002928.3"/>
</dbReference>
<dbReference type="SMR" id="Q7W9B7"/>
<dbReference type="GeneID" id="93203614"/>
<dbReference type="KEGG" id="bpa:BPP1848"/>
<dbReference type="HOGENOM" id="CLU_063240_0_0_4"/>
<dbReference type="UniPathway" id="UPA00333">
    <property type="reaction ID" value="UER00453"/>
</dbReference>
<dbReference type="Proteomes" id="UP000001421">
    <property type="component" value="Chromosome"/>
</dbReference>
<dbReference type="GO" id="GO:0020037">
    <property type="term" value="F:heme binding"/>
    <property type="evidence" value="ECO:0000250"/>
    <property type="project" value="UniProtKB"/>
</dbReference>
<dbReference type="GO" id="GO:0046872">
    <property type="term" value="F:metal ion binding"/>
    <property type="evidence" value="ECO:0007669"/>
    <property type="project" value="UniProtKB-KW"/>
</dbReference>
<dbReference type="GO" id="GO:0004833">
    <property type="term" value="F:tryptophan 2,3-dioxygenase activity"/>
    <property type="evidence" value="ECO:0000250"/>
    <property type="project" value="UniProtKB"/>
</dbReference>
<dbReference type="GO" id="GO:0019442">
    <property type="term" value="P:L-tryptophan catabolic process to acetyl-CoA"/>
    <property type="evidence" value="ECO:0007669"/>
    <property type="project" value="TreeGrafter"/>
</dbReference>
<dbReference type="GO" id="GO:0019441">
    <property type="term" value="P:L-tryptophan catabolic process to kynurenine"/>
    <property type="evidence" value="ECO:0000250"/>
    <property type="project" value="UniProtKB"/>
</dbReference>
<dbReference type="FunFam" id="1.20.58.480:FF:000001">
    <property type="entry name" value="Tryptophan 2,3-dioxygenase"/>
    <property type="match status" value="1"/>
</dbReference>
<dbReference type="Gene3D" id="1.20.58.480">
    <property type="match status" value="1"/>
</dbReference>
<dbReference type="HAMAP" id="MF_01972">
    <property type="entry name" value="T23O"/>
    <property type="match status" value="1"/>
</dbReference>
<dbReference type="InterPro" id="IPR037217">
    <property type="entry name" value="Trp/Indoleamine_2_3_dOase-like"/>
</dbReference>
<dbReference type="InterPro" id="IPR017485">
    <property type="entry name" value="Trp_2-3-dOase_bac"/>
</dbReference>
<dbReference type="InterPro" id="IPR004981">
    <property type="entry name" value="Trp_2_3_dOase"/>
</dbReference>
<dbReference type="NCBIfam" id="TIGR03036">
    <property type="entry name" value="trp_2_3_diox"/>
    <property type="match status" value="1"/>
</dbReference>
<dbReference type="PANTHER" id="PTHR10138">
    <property type="entry name" value="TRYPTOPHAN 2,3-DIOXYGENASE"/>
    <property type="match status" value="1"/>
</dbReference>
<dbReference type="PANTHER" id="PTHR10138:SF0">
    <property type="entry name" value="TRYPTOPHAN 2,3-DIOXYGENASE"/>
    <property type="match status" value="1"/>
</dbReference>
<dbReference type="Pfam" id="PF03301">
    <property type="entry name" value="Trp_dioxygenase"/>
    <property type="match status" value="1"/>
</dbReference>
<dbReference type="SUPFAM" id="SSF140959">
    <property type="entry name" value="Indolic compounds 2,3-dioxygenase-like"/>
    <property type="match status" value="1"/>
</dbReference>
<protein>
    <recommendedName>
        <fullName evidence="1">Tryptophan 2,3-dioxygenase</fullName>
        <shortName evidence="1">TDO</shortName>
        <ecNumber evidence="1">1.13.11.11</ecNumber>
    </recommendedName>
    <alternativeName>
        <fullName evidence="1">Tryptamin 2,3-dioxygenase</fullName>
    </alternativeName>
    <alternativeName>
        <fullName evidence="1">Tryptophan oxygenase</fullName>
        <shortName evidence="1">TO</shortName>
        <shortName evidence="1">TRPO</shortName>
    </alternativeName>
    <alternativeName>
        <fullName evidence="1">Tryptophan pyrrolase</fullName>
    </alternativeName>
    <alternativeName>
        <fullName evidence="1">Tryptophanase</fullName>
    </alternativeName>
</protein>